<feature type="chain" id="PRO_0000144277" description="Potassium voltage-gated channel subfamily E member 1">
    <location>
        <begin position="1"/>
        <end position="129"/>
    </location>
</feature>
<feature type="transmembrane region" description="Helical" evidence="5">
    <location>
        <begin position="44"/>
        <end position="66"/>
    </location>
</feature>
<feature type="topological domain" description="Cytoplasmic" evidence="5">
    <location>
        <begin position="67"/>
        <end position="129"/>
    </location>
</feature>
<feature type="modified residue" description="Phosphoserine; by PKC" evidence="1">
    <location>
        <position position="102"/>
    </location>
</feature>
<feature type="glycosylation site" description="N-linked (GlcNAc...) asparagine" evidence="5">
    <location>
        <position position="5"/>
    </location>
</feature>
<feature type="glycosylation site" description="N-linked (GlcNAc...) asparagine" evidence="5">
    <location>
        <position position="26"/>
    </location>
</feature>
<reference key="1">
    <citation type="submission" date="1996-06" db="EMBL/GenBank/DDBJ databases">
        <title>Cloning and expression of the cat delayed rectifier minK potassium channel.</title>
        <authorList>
            <person name="Chen L.-S.K."/>
            <person name="Cuddy M."/>
        </authorList>
    </citation>
    <scope>NUCLEOTIDE SEQUENCE [MRNA]</scope>
    <source>
        <tissue>Heart</tissue>
    </source>
</reference>
<organism>
    <name type="scientific">Felis catus</name>
    <name type="common">Cat</name>
    <name type="synonym">Felis silvestris catus</name>
    <dbReference type="NCBI Taxonomy" id="9685"/>
    <lineage>
        <taxon>Eukaryota</taxon>
        <taxon>Metazoa</taxon>
        <taxon>Chordata</taxon>
        <taxon>Craniata</taxon>
        <taxon>Vertebrata</taxon>
        <taxon>Euteleostomi</taxon>
        <taxon>Mammalia</taxon>
        <taxon>Eutheria</taxon>
        <taxon>Laurasiatheria</taxon>
        <taxon>Carnivora</taxon>
        <taxon>Feliformia</taxon>
        <taxon>Felidae</taxon>
        <taxon>Felinae</taxon>
        <taxon>Felis</taxon>
    </lineage>
</organism>
<keyword id="KW-1003">Cell membrane</keyword>
<keyword id="KW-0325">Glycoprotein</keyword>
<keyword id="KW-0407">Ion channel</keyword>
<keyword id="KW-0406">Ion transport</keyword>
<keyword id="KW-0472">Membrane</keyword>
<keyword id="KW-0597">Phosphoprotein</keyword>
<keyword id="KW-0630">Potassium</keyword>
<keyword id="KW-0631">Potassium channel</keyword>
<keyword id="KW-0633">Potassium transport</keyword>
<keyword id="KW-1185">Reference proteome</keyword>
<keyword id="KW-0812">Transmembrane</keyword>
<keyword id="KW-1133">Transmembrane helix</keyword>
<keyword id="KW-0813">Transport</keyword>
<keyword id="KW-0851">Voltage-gated channel</keyword>
<dbReference type="EMBL" id="U62404">
    <property type="protein sequence ID" value="AAD41532.1"/>
    <property type="molecule type" value="mRNA"/>
</dbReference>
<dbReference type="RefSeq" id="NP_001009206.1">
    <property type="nucleotide sequence ID" value="NM_001009206.1"/>
</dbReference>
<dbReference type="SMR" id="Q9XSP1"/>
<dbReference type="STRING" id="9685.ENSFCAP00000006281"/>
<dbReference type="GlyCosmos" id="Q9XSP1">
    <property type="glycosylation" value="2 sites, No reported glycans"/>
</dbReference>
<dbReference type="PaxDb" id="9685-ENSFCAP00000006281"/>
<dbReference type="GeneID" id="493681"/>
<dbReference type="KEGG" id="fca:493681"/>
<dbReference type="CTD" id="3753"/>
<dbReference type="eggNOG" id="ENOG502SG7D">
    <property type="taxonomic scope" value="Eukaryota"/>
</dbReference>
<dbReference type="InParanoid" id="Q9XSP1"/>
<dbReference type="OrthoDB" id="8772344at2759"/>
<dbReference type="TreeFam" id="TF335976"/>
<dbReference type="Proteomes" id="UP000011712">
    <property type="component" value="Unplaced"/>
</dbReference>
<dbReference type="GO" id="GO:0016324">
    <property type="term" value="C:apical plasma membrane"/>
    <property type="evidence" value="ECO:0007669"/>
    <property type="project" value="UniProtKB-SubCell"/>
</dbReference>
<dbReference type="GO" id="GO:0045121">
    <property type="term" value="C:membrane raft"/>
    <property type="evidence" value="ECO:0007669"/>
    <property type="project" value="UniProtKB-SubCell"/>
</dbReference>
<dbReference type="GO" id="GO:0005886">
    <property type="term" value="C:plasma membrane"/>
    <property type="evidence" value="ECO:0000250"/>
    <property type="project" value="UniProtKB"/>
</dbReference>
<dbReference type="GO" id="GO:0008076">
    <property type="term" value="C:voltage-gated potassium channel complex"/>
    <property type="evidence" value="ECO:0000318"/>
    <property type="project" value="GO_Central"/>
</dbReference>
<dbReference type="GO" id="GO:0005251">
    <property type="term" value="F:delayed rectifier potassium channel activity"/>
    <property type="evidence" value="ECO:0000250"/>
    <property type="project" value="UniProtKB"/>
</dbReference>
<dbReference type="GO" id="GO:0015459">
    <property type="term" value="F:potassium channel regulator activity"/>
    <property type="evidence" value="ECO:0000250"/>
    <property type="project" value="UniProtKB"/>
</dbReference>
<dbReference type="GO" id="GO:0044325">
    <property type="term" value="F:transmembrane transporter binding"/>
    <property type="evidence" value="ECO:0000318"/>
    <property type="project" value="GO_Central"/>
</dbReference>
<dbReference type="GO" id="GO:0086011">
    <property type="term" value="P:membrane repolarization during action potential"/>
    <property type="evidence" value="ECO:0000318"/>
    <property type="project" value="GO_Central"/>
</dbReference>
<dbReference type="GO" id="GO:0098915">
    <property type="term" value="P:membrane repolarization during ventricular cardiac muscle cell action potential"/>
    <property type="evidence" value="ECO:0007669"/>
    <property type="project" value="GOC"/>
</dbReference>
<dbReference type="GO" id="GO:1902260">
    <property type="term" value="P:negative regulation of delayed rectifier potassium channel activity"/>
    <property type="evidence" value="ECO:0000250"/>
    <property type="project" value="UniProtKB"/>
</dbReference>
<dbReference type="GO" id="GO:0097623">
    <property type="term" value="P:potassium ion export across plasma membrane"/>
    <property type="evidence" value="ECO:0000318"/>
    <property type="project" value="GO_Central"/>
</dbReference>
<dbReference type="GO" id="GO:0086091">
    <property type="term" value="P:regulation of heart rate by cardiac conduction"/>
    <property type="evidence" value="ECO:0000318"/>
    <property type="project" value="GO_Central"/>
</dbReference>
<dbReference type="GO" id="GO:0060307">
    <property type="term" value="P:regulation of ventricular cardiac muscle cell membrane repolarization"/>
    <property type="evidence" value="ECO:0000318"/>
    <property type="project" value="GO_Central"/>
</dbReference>
<dbReference type="GO" id="GO:0086005">
    <property type="term" value="P:ventricular cardiac muscle cell action potential"/>
    <property type="evidence" value="ECO:0000318"/>
    <property type="project" value="GO_Central"/>
</dbReference>
<dbReference type="InterPro" id="IPR000369">
    <property type="entry name" value="K_chnl_KCNE"/>
</dbReference>
<dbReference type="InterPro" id="IPR005424">
    <property type="entry name" value="KCNE1"/>
</dbReference>
<dbReference type="PANTHER" id="PTHR15282:SF10">
    <property type="entry name" value="POTASSIUM VOLTAGE-GATED CHANNEL SUBFAMILY E MEMBER 1"/>
    <property type="match status" value="1"/>
</dbReference>
<dbReference type="PANTHER" id="PTHR15282">
    <property type="entry name" value="POTASSIUM VOLTAGE-GATED CHANNEL SUBFAMILY E MEMBER 1, 3"/>
    <property type="match status" value="1"/>
</dbReference>
<dbReference type="Pfam" id="PF02060">
    <property type="entry name" value="ISK_Channel"/>
    <property type="match status" value="1"/>
</dbReference>
<dbReference type="PRINTS" id="PR01604">
    <property type="entry name" value="KCNE1CHANNEL"/>
</dbReference>
<dbReference type="PRINTS" id="PR00168">
    <property type="entry name" value="KCNECHANNEL"/>
</dbReference>
<name>KCNE1_FELCA</name>
<sequence>MILPNTTATTPFLNALWQGTAHQGGNTSGLARRSPGGDDSQLEALYILMVLGFFGFFTLGIMLSYIRSKKLEHSHDPFNVYIESDTWQEKDKAYLQARVLESYKACYVIENQLAVERPNAHLPEIKPLS</sequence>
<protein>
    <recommendedName>
        <fullName>Potassium voltage-gated channel subfamily E member 1</fullName>
    </recommendedName>
    <alternativeName>
        <fullName>Delayed rectifier potassium channel subunit IsK</fullName>
    </alternativeName>
    <alternativeName>
        <fullName>IKs producing slow voltage-gated potassium channel subunit beta Mink</fullName>
    </alternativeName>
    <alternativeName>
        <fullName>Minimal potassium channel</fullName>
    </alternativeName>
</protein>
<comment type="function">
    <text evidence="2">Ancillary protein that functions as a regulatory subunit of the voltage-gated potassium (Kv) channel complex composed of pore-forming and potassium-conducting alpha subunits and of regulatory beta subunits. KCNE1 beta subunit modulates the gating kinetics and enhances stability of the channel complex. Alters the gating of the delayed rectifier Kv channel containing KCNB1 alpha subunit. Associates with KCNQ1/KVLQT1 alpha subunit to form the slowly activating delayed rectifier cardiac potassium (IKs) channel responsible for ventricular muscle action potential repolarization. The outward current reaches its steady state only after 50 seconds. Assembly with KCNH2/HERG alpha subunit Kv channel may regulate the rapidly activating component of the delayed rectifying potassium current (IKr) in heart.</text>
</comment>
<comment type="subunit">
    <text evidence="2 3 4">Interacts with KCNB1. Interacts with KCNC2 (By similarity). Associates with KCNH2/HERG. Interacts with KCNQ1; targets the complex KCNQ1-KCNE1 to the membrane raft (By similarity).</text>
</comment>
<comment type="subcellular location">
    <subcellularLocation>
        <location evidence="2 3">Cell membrane</location>
        <topology evidence="2">Single-pass type I membrane protein</topology>
    </subcellularLocation>
    <subcellularLocation>
        <location evidence="3">Apical cell membrane</location>
    </subcellularLocation>
    <subcellularLocation>
        <location evidence="2">Membrane raft</location>
    </subcellularLocation>
    <text evidence="2 3">Colocalizes with KCNB1 at the plasma membrane (By similarity). Targets to the membrane raft when associated with KCNQ1 (By similarity).</text>
</comment>
<comment type="PTM">
    <text evidence="1">Phosphorylation inhibits the potassium current.</text>
</comment>
<comment type="PTM">
    <text evidence="1">N-glycosylation at Asn-26 occurs post-translationally, and requires prior cotranslational glycosylation at Asn-5.</text>
</comment>
<comment type="similarity">
    <text evidence="6">Belongs to the potassium channel KCNE family.</text>
</comment>
<evidence type="ECO:0000250" key="1"/>
<evidence type="ECO:0000250" key="2">
    <source>
        <dbReference type="UniProtKB" id="P15382"/>
    </source>
</evidence>
<evidence type="ECO:0000250" key="3">
    <source>
        <dbReference type="UniProtKB" id="P15383"/>
    </source>
</evidence>
<evidence type="ECO:0000250" key="4">
    <source>
        <dbReference type="UniProtKB" id="P23299"/>
    </source>
</evidence>
<evidence type="ECO:0000255" key="5"/>
<evidence type="ECO:0000305" key="6"/>
<accession>Q9XSP1</accession>
<gene>
    <name type="primary">KCNE1</name>
</gene>
<proteinExistence type="evidence at transcript level"/>